<accession>Q3SZI5</accession>
<feature type="chain" id="PRO_0000282884" description="Dicarboxylate carrier UCP2">
    <location>
        <begin position="1"/>
        <end position="309"/>
    </location>
</feature>
<feature type="topological domain" description="Mitochondrial intermembrane" evidence="5">
    <location>
        <begin position="1"/>
        <end position="16"/>
    </location>
</feature>
<feature type="transmembrane region" description="Helical; Name=1" evidence="2">
    <location>
        <begin position="17"/>
        <end position="40"/>
    </location>
</feature>
<feature type="topological domain" description="Mitochondrial matrix" evidence="5">
    <location>
        <begin position="41"/>
        <end position="77"/>
    </location>
</feature>
<feature type="transmembrane region" description="Helical; Name=2" evidence="2">
    <location>
        <begin position="78"/>
        <end position="103"/>
    </location>
</feature>
<feature type="topological domain" description="Mitochondrial intermembrane" evidence="5">
    <location>
        <begin position="104"/>
        <end position="119"/>
    </location>
</feature>
<feature type="transmembrane region" description="Helical; Name=3" evidence="2">
    <location>
        <begin position="120"/>
        <end position="145"/>
    </location>
</feature>
<feature type="topological domain" description="Mitochondrial matrix" evidence="5">
    <location>
        <begin position="146"/>
        <end position="173"/>
    </location>
</feature>
<feature type="transmembrane region" description="Helical; Name=4" evidence="2">
    <location>
        <begin position="174"/>
        <end position="199"/>
    </location>
</feature>
<feature type="topological domain" description="Mitochondrial intermembrane" evidence="5">
    <location>
        <begin position="200"/>
        <end position="217"/>
    </location>
</feature>
<feature type="transmembrane region" description="Helical; Name=5" evidence="2">
    <location>
        <begin position="218"/>
        <end position="242"/>
    </location>
</feature>
<feature type="topological domain" description="Mitochondrial matrix" evidence="5">
    <location>
        <begin position="243"/>
        <end position="268"/>
    </location>
</feature>
<feature type="transmembrane region" description="Helical; Name=6" evidence="2">
    <location>
        <begin position="269"/>
        <end position="294"/>
    </location>
</feature>
<feature type="topological domain" description="Mitochondrial intermembrane" evidence="5">
    <location>
        <begin position="295"/>
        <end position="309"/>
    </location>
</feature>
<feature type="repeat" description="Solcar 1" evidence="4">
    <location>
        <begin position="11"/>
        <end position="106"/>
    </location>
</feature>
<feature type="repeat" description="Solcar 2" evidence="4">
    <location>
        <begin position="114"/>
        <end position="203"/>
    </location>
</feature>
<feature type="repeat" description="Solcar 3" evidence="4">
    <location>
        <begin position="212"/>
        <end position="297"/>
    </location>
</feature>
<feature type="region of interest" description="Important for interaction with long-chain fatty acids" evidence="2">
    <location>
        <begin position="16"/>
        <end position="63"/>
    </location>
</feature>
<feature type="region of interest" description="Important for interaction with long-chain fatty acids" evidence="2">
    <location>
        <begin position="278"/>
        <end position="285"/>
    </location>
</feature>
<feature type="site" description="Important for inhibition by GDP" evidence="2">
    <location>
        <position position="141"/>
    </location>
</feature>
<feature type="site" description="Important for inhibition by GDP" evidence="2">
    <location>
        <position position="185"/>
    </location>
</feature>
<organism>
    <name type="scientific">Bos taurus</name>
    <name type="common">Bovine</name>
    <dbReference type="NCBI Taxonomy" id="9913"/>
    <lineage>
        <taxon>Eukaryota</taxon>
        <taxon>Metazoa</taxon>
        <taxon>Chordata</taxon>
        <taxon>Craniata</taxon>
        <taxon>Vertebrata</taxon>
        <taxon>Euteleostomi</taxon>
        <taxon>Mammalia</taxon>
        <taxon>Eutheria</taxon>
        <taxon>Laurasiatheria</taxon>
        <taxon>Artiodactyla</taxon>
        <taxon>Ruminantia</taxon>
        <taxon>Pecora</taxon>
        <taxon>Bovidae</taxon>
        <taxon>Bovinae</taxon>
        <taxon>Bos</taxon>
    </lineage>
</organism>
<sequence>MVGFKATDVPPTATVKFLGAGTAACIADLITFPLDTAKVRLQIQGERQGPMQAAASAQYRGVLGTILTMVRTEGPRSLYSGLVAGLQRQMSFASVRIGLYDSVKQFYTKGSEHAGIGSRLLAGSTTGALAVAVAQPTDVVKVRFQAQARAGAGRRYQSTVEAYKTIAREEGFRGLWKGTSPNVARNAIVNCAELVTYDLIKDTLLKAHLMTDDLPCHFTSAFGAGFCTTVIASPVDVVKTRYMNSALGQYSSAGHCALTMLQKEGPQAFYKGFMPSFLRLGSWNVVMFVTYEQLKRALMAARASREAPF</sequence>
<reference key="1">
    <citation type="submission" date="2005-08" db="EMBL/GenBank/DDBJ databases">
        <authorList>
            <consortium name="NIH - Mammalian Gene Collection (MGC) project"/>
        </authorList>
    </citation>
    <scope>NUCLEOTIDE SEQUENCE [LARGE SCALE MRNA]</scope>
    <source>
        <strain>Crossbred X Angus</strain>
        <tissue>Ileum</tissue>
    </source>
</reference>
<protein>
    <recommendedName>
        <fullName evidence="1">Dicarboxylate carrier UCP2</fullName>
    </recommendedName>
    <alternativeName>
        <fullName>Mitochondrial uncoupling protein 2</fullName>
        <shortName>UCP 2</shortName>
    </alternativeName>
    <alternativeName>
        <fullName>Solute carrier family 25 member 8</fullName>
    </alternativeName>
</protein>
<gene>
    <name type="primary">UCP2</name>
    <name type="synonym">SLC25A8</name>
</gene>
<dbReference type="EMBL" id="BC102839">
    <property type="protein sequence ID" value="AAI02840.1"/>
    <property type="molecule type" value="mRNA"/>
</dbReference>
<dbReference type="RefSeq" id="NP_001028783.1">
    <property type="nucleotide sequence ID" value="NM_001033611.2"/>
</dbReference>
<dbReference type="SMR" id="Q3SZI5"/>
<dbReference type="FunCoup" id="Q3SZI5">
    <property type="interactions" value="865"/>
</dbReference>
<dbReference type="STRING" id="9913.ENSBTAP00000004810"/>
<dbReference type="PaxDb" id="9913-ENSBTAP00000004810"/>
<dbReference type="Ensembl" id="ENSBTAT00000004810.6">
    <property type="protein sequence ID" value="ENSBTAP00000004810.5"/>
    <property type="gene ID" value="ENSBTAG00000003692.7"/>
</dbReference>
<dbReference type="GeneID" id="281562"/>
<dbReference type="KEGG" id="bta:281562"/>
<dbReference type="CTD" id="7351"/>
<dbReference type="VEuPathDB" id="HostDB:ENSBTAG00000003692"/>
<dbReference type="VGNC" id="VGNC:36641">
    <property type="gene designation" value="UCP2"/>
</dbReference>
<dbReference type="eggNOG" id="KOG0753">
    <property type="taxonomic scope" value="Eukaryota"/>
</dbReference>
<dbReference type="GeneTree" id="ENSGT00940000159524"/>
<dbReference type="HOGENOM" id="CLU_015166_14_2_1"/>
<dbReference type="InParanoid" id="Q3SZI5"/>
<dbReference type="OMA" id="HARRYCS"/>
<dbReference type="OrthoDB" id="448427at2759"/>
<dbReference type="TreeFam" id="TF323211"/>
<dbReference type="Reactome" id="R-BTA-167826">
    <property type="pathway name" value="The fatty acid cycling model"/>
</dbReference>
<dbReference type="Proteomes" id="UP000009136">
    <property type="component" value="Chromosome 15"/>
</dbReference>
<dbReference type="Bgee" id="ENSBTAG00000003692">
    <property type="expression patterns" value="Expressed in lung and 107 other cell types or tissues"/>
</dbReference>
<dbReference type="GO" id="GO:0005743">
    <property type="term" value="C:mitochondrial inner membrane"/>
    <property type="evidence" value="ECO:0007669"/>
    <property type="project" value="UniProtKB-SubCell"/>
</dbReference>
<dbReference type="GO" id="GO:0015297">
    <property type="term" value="F:antiporter activity"/>
    <property type="evidence" value="ECO:0000250"/>
    <property type="project" value="UniProtKB"/>
</dbReference>
<dbReference type="GO" id="GO:0015108">
    <property type="term" value="F:chloride transmembrane transporter activity"/>
    <property type="evidence" value="ECO:0007669"/>
    <property type="project" value="Ensembl"/>
</dbReference>
<dbReference type="GO" id="GO:0019003">
    <property type="term" value="F:GDP binding"/>
    <property type="evidence" value="ECO:0007669"/>
    <property type="project" value="Ensembl"/>
</dbReference>
<dbReference type="GO" id="GO:0015183">
    <property type="term" value="F:L-aspartate transmembrane transporter activity"/>
    <property type="evidence" value="ECO:0000250"/>
    <property type="project" value="UniProtKB"/>
</dbReference>
<dbReference type="GO" id="GO:0015140">
    <property type="term" value="F:malate transmembrane transporter activity"/>
    <property type="evidence" value="ECO:0000250"/>
    <property type="project" value="UniProtKB"/>
</dbReference>
<dbReference type="GO" id="GO:0015131">
    <property type="term" value="F:oxaloacetate transmembrane transporter activity"/>
    <property type="evidence" value="ECO:0000250"/>
    <property type="project" value="UniProtKB"/>
</dbReference>
<dbReference type="GO" id="GO:0017077">
    <property type="term" value="F:oxidative phosphorylation uncoupler activity"/>
    <property type="evidence" value="ECO:0000318"/>
    <property type="project" value="GO_Central"/>
</dbReference>
<dbReference type="GO" id="GO:0140787">
    <property type="term" value="F:phosphate ion uniporter activity"/>
    <property type="evidence" value="ECO:0000250"/>
    <property type="project" value="UniProtKB"/>
</dbReference>
<dbReference type="GO" id="GO:0042803">
    <property type="term" value="F:protein homodimerization activity"/>
    <property type="evidence" value="ECO:0000250"/>
    <property type="project" value="UniProtKB"/>
</dbReference>
<dbReference type="GO" id="GO:0015078">
    <property type="term" value="F:proton transmembrane transporter activity"/>
    <property type="evidence" value="ECO:0000250"/>
    <property type="project" value="UniProtKB"/>
</dbReference>
<dbReference type="GO" id="GO:0008271">
    <property type="term" value="F:secondary active sulfate transmembrane transporter activity"/>
    <property type="evidence" value="ECO:0000250"/>
    <property type="project" value="UniProtKB"/>
</dbReference>
<dbReference type="GO" id="GO:1990845">
    <property type="term" value="P:adaptive thermogenesis"/>
    <property type="evidence" value="ECO:0000318"/>
    <property type="project" value="GO_Central"/>
</dbReference>
<dbReference type="GO" id="GO:0015740">
    <property type="term" value="P:C4-dicarboxylate transport"/>
    <property type="evidence" value="ECO:0000250"/>
    <property type="project" value="UniProtKB"/>
</dbReference>
<dbReference type="GO" id="GO:0071333">
    <property type="term" value="P:cellular response to glucose stimulus"/>
    <property type="evidence" value="ECO:0000250"/>
    <property type="project" value="UniProtKB"/>
</dbReference>
<dbReference type="GO" id="GO:0006541">
    <property type="term" value="P:glutamine metabolic process"/>
    <property type="evidence" value="ECO:0000250"/>
    <property type="project" value="UniProtKB"/>
</dbReference>
<dbReference type="GO" id="GO:0006096">
    <property type="term" value="P:glycolytic process"/>
    <property type="evidence" value="ECO:0000250"/>
    <property type="project" value="UniProtKB"/>
</dbReference>
<dbReference type="GO" id="GO:0015909">
    <property type="term" value="P:long-chain fatty acid transport"/>
    <property type="evidence" value="ECO:0007669"/>
    <property type="project" value="Ensembl"/>
</dbReference>
<dbReference type="GO" id="GO:0030225">
    <property type="term" value="P:macrophage differentiation"/>
    <property type="evidence" value="ECO:0000250"/>
    <property type="project" value="UniProtKB"/>
</dbReference>
<dbReference type="GO" id="GO:0000266">
    <property type="term" value="P:mitochondrial fission"/>
    <property type="evidence" value="ECO:0000250"/>
    <property type="project" value="UniProtKB"/>
</dbReference>
<dbReference type="GO" id="GO:1990542">
    <property type="term" value="P:mitochondrial transmembrane transport"/>
    <property type="evidence" value="ECO:0000250"/>
    <property type="project" value="UniProtKB"/>
</dbReference>
<dbReference type="GO" id="GO:0110099">
    <property type="term" value="P:negative regulation of calcium import into the mitochondrion"/>
    <property type="evidence" value="ECO:0007669"/>
    <property type="project" value="Ensembl"/>
</dbReference>
<dbReference type="GO" id="GO:0043524">
    <property type="term" value="P:negative regulation of neuron apoptotic process"/>
    <property type="evidence" value="ECO:0007669"/>
    <property type="project" value="Ensembl"/>
</dbReference>
<dbReference type="GO" id="GO:0120162">
    <property type="term" value="P:positive regulation of cold-induced thermogenesis"/>
    <property type="evidence" value="ECO:0007669"/>
    <property type="project" value="Ensembl"/>
</dbReference>
<dbReference type="GO" id="GO:0072593">
    <property type="term" value="P:reactive oxygen species metabolic process"/>
    <property type="evidence" value="ECO:0000250"/>
    <property type="project" value="UniProtKB"/>
</dbReference>
<dbReference type="GO" id="GO:0051881">
    <property type="term" value="P:regulation of mitochondrial membrane potential"/>
    <property type="evidence" value="ECO:0007669"/>
    <property type="project" value="Ensembl"/>
</dbReference>
<dbReference type="GO" id="GO:0009409">
    <property type="term" value="P:response to cold"/>
    <property type="evidence" value="ECO:0000318"/>
    <property type="project" value="GO_Central"/>
</dbReference>
<dbReference type="GO" id="GO:0001666">
    <property type="term" value="P:response to hypoxia"/>
    <property type="evidence" value="ECO:0007669"/>
    <property type="project" value="Ensembl"/>
</dbReference>
<dbReference type="FunFam" id="1.50.40.10:FF:000008">
    <property type="entry name" value="Mitochondrial uncoupling protein 2"/>
    <property type="match status" value="1"/>
</dbReference>
<dbReference type="Gene3D" id="1.50.40.10">
    <property type="entry name" value="Mitochondrial carrier domain"/>
    <property type="match status" value="1"/>
</dbReference>
<dbReference type="InterPro" id="IPR002067">
    <property type="entry name" value="Mit_carrier"/>
</dbReference>
<dbReference type="InterPro" id="IPR050391">
    <property type="entry name" value="Mito_Metabolite_Transporter"/>
</dbReference>
<dbReference type="InterPro" id="IPR018108">
    <property type="entry name" value="Mitochondrial_sb/sol_carrier"/>
</dbReference>
<dbReference type="InterPro" id="IPR023395">
    <property type="entry name" value="Mt_carrier_dom_sf"/>
</dbReference>
<dbReference type="PANTHER" id="PTHR45618">
    <property type="entry name" value="MITOCHONDRIAL DICARBOXYLATE CARRIER-RELATED"/>
    <property type="match status" value="1"/>
</dbReference>
<dbReference type="Pfam" id="PF00153">
    <property type="entry name" value="Mito_carr"/>
    <property type="match status" value="3"/>
</dbReference>
<dbReference type="PRINTS" id="PR00784">
    <property type="entry name" value="MTUNCOUPLING"/>
</dbReference>
<dbReference type="SUPFAM" id="SSF103506">
    <property type="entry name" value="Mitochondrial carrier"/>
    <property type="match status" value="1"/>
</dbReference>
<dbReference type="PROSITE" id="PS50920">
    <property type="entry name" value="SOLCAR"/>
    <property type="match status" value="3"/>
</dbReference>
<comment type="function">
    <text evidence="1 2">Antiporter that exports dicarboxylate intermediates of the Krebs cycle in exchange for phosphate plus a proton across the inner membrane of mitochondria, a process driven by mitochondrial motive force with an overall impact on glycolysis, glutaminolysis and glutathione-dependent redox balance. Continuous export of oxaloacetate and related four-carbon dicarboxylates from mitochondrial matrix into the cytosol negatively regulates the oxidation of acetyl-CoA substrates via the Krebs cycle lowering the ATP/ADP ratio and reactive oxygen species (ROS) production (By similarity). May mediate inducible proton entry into the mitochondrial matrix affecting ATP turnover as a protection mechanism against oxidative stress. The proton currents are most likely associated with fatty acid flipping across the inner membrane of mitochondria in a metabolic process regulated by free fatty acids and purine nucleotides (By similarity). Regulates the use of glucose as a source of energy. Required for glucose-induced DRP1-dependent mitochondrial fission and neuron activation in the ventromedial nucleus of the hypothalamus (VMH). This mitochondrial adaptation mechanism modulates the VMH pool of glucose-excited neurons with an impact on systemic glucose homeostasis. Regulates ROS levels and metabolic reprogramming of macrophages during the resolution phase of inflammation. Attenuates ROS production in response to IL33 to preserve the integrity of the Krebs cycle required for persistent production of itaconate and subsequent GATA3-dependent differentiation of inflammation-resolving alternatively activated macrophages (By similarity). Can unidirectionally transport anions including L-malate, L-aspartate, phosphate and chloride ions (By similarity). Does not mediate adaptive thermogenesis (By similarity).</text>
</comment>
<comment type="catalytic activity">
    <reaction evidence="1">
        <text>L-aspartate(out) + phosphate(in) + H(+)(in) = L-aspartate(in) + phosphate(out) + H(+)(out)</text>
        <dbReference type="Rhea" id="RHEA:73307"/>
        <dbReference type="ChEBI" id="CHEBI:15378"/>
        <dbReference type="ChEBI" id="CHEBI:29991"/>
        <dbReference type="ChEBI" id="CHEBI:43474"/>
    </reaction>
</comment>
<comment type="catalytic activity">
    <reaction evidence="1">
        <text>oxaloacetate(out) + phosphate(in) + H(+)(in) = oxaloacetate(in) + phosphate(out) + H(+)(out)</text>
        <dbReference type="Rhea" id="RHEA:73303"/>
        <dbReference type="ChEBI" id="CHEBI:15378"/>
        <dbReference type="ChEBI" id="CHEBI:16452"/>
        <dbReference type="ChEBI" id="CHEBI:43474"/>
    </reaction>
</comment>
<comment type="catalytic activity">
    <reaction evidence="1">
        <text>(S)-malate(out) + phosphate(in) + H(+)(in) = (S)-malate(in) + phosphate(out) + H(+)(out)</text>
        <dbReference type="Rhea" id="RHEA:73299"/>
        <dbReference type="ChEBI" id="CHEBI:15378"/>
        <dbReference type="ChEBI" id="CHEBI:15589"/>
        <dbReference type="ChEBI" id="CHEBI:43474"/>
    </reaction>
</comment>
<comment type="catalytic activity">
    <reaction evidence="1">
        <text>malonate(out) + phosphate(in) + H(+)(in) = malonate(in) + phosphate(out) + H(+)(out)</text>
        <dbReference type="Rhea" id="RHEA:73387"/>
        <dbReference type="ChEBI" id="CHEBI:15378"/>
        <dbReference type="ChEBI" id="CHEBI:15792"/>
        <dbReference type="ChEBI" id="CHEBI:43474"/>
    </reaction>
</comment>
<comment type="catalytic activity">
    <reaction evidence="1">
        <text>sulfate(out) + phosphate(in) + H(+)(in) = sulfate(in) + phosphate(out) + H(+)(out)</text>
        <dbReference type="Rhea" id="RHEA:73391"/>
        <dbReference type="ChEBI" id="CHEBI:15378"/>
        <dbReference type="ChEBI" id="CHEBI:16189"/>
        <dbReference type="ChEBI" id="CHEBI:43474"/>
    </reaction>
</comment>
<comment type="catalytic activity">
    <reaction evidence="1">
        <text>(S)-malate(out) = (S)-malate(in)</text>
        <dbReference type="Rhea" id="RHEA:74555"/>
        <dbReference type="ChEBI" id="CHEBI:15589"/>
    </reaction>
</comment>
<comment type="catalytic activity">
    <reaction evidence="1">
        <text>L-aspartate(out) = L-aspartate(in)</text>
        <dbReference type="Rhea" id="RHEA:66332"/>
        <dbReference type="ChEBI" id="CHEBI:29991"/>
    </reaction>
</comment>
<comment type="catalytic activity">
    <reaction evidence="1">
        <text>phosphate(in) = phosphate(out)</text>
        <dbReference type="Rhea" id="RHEA:32823"/>
        <dbReference type="ChEBI" id="CHEBI:43474"/>
    </reaction>
</comment>
<comment type="catalytic activity">
    <reaction evidence="1">
        <text>chloride(in) = chloride(out)</text>
        <dbReference type="Rhea" id="RHEA:29823"/>
        <dbReference type="ChEBI" id="CHEBI:17996"/>
    </reaction>
</comment>
<comment type="catalytic activity">
    <reaction evidence="1 2">
        <text>H(+)(in) = H(+)(out)</text>
        <dbReference type="Rhea" id="RHEA:34979"/>
        <dbReference type="ChEBI" id="CHEBI:15378"/>
    </reaction>
</comment>
<comment type="catalytic activity">
    <reaction evidence="2">
        <text>a long-chain fatty acid(out) = a long-chain fatty acid(in)</text>
        <dbReference type="Rhea" id="RHEA:39283"/>
        <dbReference type="ChEBI" id="CHEBI:57560"/>
    </reaction>
</comment>
<comment type="subunit">
    <text evidence="1">Homotetramer. Adopts an asymmetrical dimer of dimers functional form. Interacts with MICU1 (when methylated); leading to decrease the calcium sensitivity of MICU1.</text>
</comment>
<comment type="subcellular location">
    <subcellularLocation>
        <location evidence="2">Mitochondrion inner membrane</location>
        <topology evidence="3">Multi-pass membrane protein</topology>
    </subcellularLocation>
</comment>
<comment type="domain">
    <text evidence="2">The GDP-binding domain is located within the hydrophilic cavity, with GDP phosphates likely forming salt bridges with the charged residues, Lys-141 and Arg-185.</text>
</comment>
<comment type="domain">
    <text evidence="2">The long-chain fatty acid-binding domain consists of an hydrophobic groove between peripheral transmembrane helices 1 and 6 near the matrix side.</text>
</comment>
<comment type="similarity">
    <text evidence="5">Belongs to the mitochondrial carrier (TC 2.A.29) family.</text>
</comment>
<comment type="caution">
    <text evidence="1 2">The role of UCP2/SLC25A8 in mitochondrial proton conductance is a matter of debate. It was initially suggested that it mediates proton leak that increases net proton conductance in response to ROS such as reactive alkenals generated during fatty acid oxidation in mitochondria. By lowering the proton motive force, it would provide for feedback control of mitochondrial ROS metabolism limiting extensive ROS production and protecting cells against oxidative stress. This activity and its potential regulation by ubiquinones and nucleotides was disputed by later studies, which failed to reproduce the effect on proton conductance under physiological conditions. Rather than 'uncoupling' the link between electron transfer and ATP synthesis, it may couple metabolite transport to proton flux to allow for optimal ATP turnover.</text>
</comment>
<proteinExistence type="evidence at transcript level"/>
<evidence type="ECO:0000250" key="1">
    <source>
        <dbReference type="UniProtKB" id="P55851"/>
    </source>
</evidence>
<evidence type="ECO:0000250" key="2">
    <source>
        <dbReference type="UniProtKB" id="P70406"/>
    </source>
</evidence>
<evidence type="ECO:0000255" key="3"/>
<evidence type="ECO:0000255" key="4">
    <source>
        <dbReference type="PROSITE-ProRule" id="PRU00282"/>
    </source>
</evidence>
<evidence type="ECO:0000305" key="5"/>
<name>UCP2_BOVIN</name>
<keyword id="KW-0472">Membrane</keyword>
<keyword id="KW-0496">Mitochondrion</keyword>
<keyword id="KW-0999">Mitochondrion inner membrane</keyword>
<keyword id="KW-1185">Reference proteome</keyword>
<keyword id="KW-0677">Repeat</keyword>
<keyword id="KW-0812">Transmembrane</keyword>
<keyword id="KW-1133">Transmembrane helix</keyword>
<keyword id="KW-0813">Transport</keyword>